<evidence type="ECO:0000255" key="1">
    <source>
        <dbReference type="HAMAP-Rule" id="MF_00514"/>
    </source>
</evidence>
<evidence type="ECO:0000256" key="2">
    <source>
        <dbReference type="SAM" id="MobiDB-lite"/>
    </source>
</evidence>
<evidence type="ECO:0000305" key="3"/>
<proteinExistence type="inferred from homology"/>
<accession>A7MNZ2</accession>
<keyword id="KW-1185">Reference proteome</keyword>
<keyword id="KW-0687">Ribonucleoprotein</keyword>
<keyword id="KW-0689">Ribosomal protein</keyword>
<sequence length="65" mass="7289">MPKIKTVRGAAKRFKKTGKGGFKHKHANLRHILTKKATKRKRHLRPKAMVSKGDLGLVIACLPYA</sequence>
<gene>
    <name evidence="1" type="primary">rpmI</name>
    <name type="ordered locus">ESA_02120</name>
</gene>
<organism>
    <name type="scientific">Cronobacter sakazakii (strain ATCC BAA-894)</name>
    <name type="common">Enterobacter sakazakii</name>
    <dbReference type="NCBI Taxonomy" id="290339"/>
    <lineage>
        <taxon>Bacteria</taxon>
        <taxon>Pseudomonadati</taxon>
        <taxon>Pseudomonadota</taxon>
        <taxon>Gammaproteobacteria</taxon>
        <taxon>Enterobacterales</taxon>
        <taxon>Enterobacteriaceae</taxon>
        <taxon>Cronobacter</taxon>
    </lineage>
</organism>
<feature type="chain" id="PRO_1000050687" description="Large ribosomal subunit protein bL35">
    <location>
        <begin position="1"/>
        <end position="65"/>
    </location>
</feature>
<feature type="region of interest" description="Disordered" evidence="2">
    <location>
        <begin position="1"/>
        <end position="22"/>
    </location>
</feature>
<feature type="compositionally biased region" description="Basic residues" evidence="2">
    <location>
        <begin position="10"/>
        <end position="22"/>
    </location>
</feature>
<protein>
    <recommendedName>
        <fullName evidence="1">Large ribosomal subunit protein bL35</fullName>
    </recommendedName>
    <alternativeName>
        <fullName evidence="3">50S ribosomal protein L35</fullName>
    </alternativeName>
</protein>
<name>RL35_CROS8</name>
<comment type="similarity">
    <text evidence="1">Belongs to the bacterial ribosomal protein bL35 family.</text>
</comment>
<reference key="1">
    <citation type="journal article" date="2010" name="PLoS ONE">
        <title>Genome sequence of Cronobacter sakazakii BAA-894 and comparative genomic hybridization analysis with other Cronobacter species.</title>
        <authorList>
            <person name="Kucerova E."/>
            <person name="Clifton S.W."/>
            <person name="Xia X.Q."/>
            <person name="Long F."/>
            <person name="Porwollik S."/>
            <person name="Fulton L."/>
            <person name="Fronick C."/>
            <person name="Minx P."/>
            <person name="Kyung K."/>
            <person name="Warren W."/>
            <person name="Fulton R."/>
            <person name="Feng D."/>
            <person name="Wollam A."/>
            <person name="Shah N."/>
            <person name="Bhonagiri V."/>
            <person name="Nash W.E."/>
            <person name="Hallsworth-Pepin K."/>
            <person name="Wilson R.K."/>
            <person name="McClelland M."/>
            <person name="Forsythe S.J."/>
        </authorList>
    </citation>
    <scope>NUCLEOTIDE SEQUENCE [LARGE SCALE GENOMIC DNA]</scope>
    <source>
        <strain>ATCC BAA-894</strain>
    </source>
</reference>
<dbReference type="EMBL" id="CP000783">
    <property type="protein sequence ID" value="ABU77369.1"/>
    <property type="molecule type" value="Genomic_DNA"/>
</dbReference>
<dbReference type="RefSeq" id="WP_001124225.1">
    <property type="nucleotide sequence ID" value="NC_009778.1"/>
</dbReference>
<dbReference type="SMR" id="A7MNZ2"/>
<dbReference type="GeneID" id="97601348"/>
<dbReference type="KEGG" id="esa:ESA_02120"/>
<dbReference type="HOGENOM" id="CLU_169643_1_1_6"/>
<dbReference type="Proteomes" id="UP000000260">
    <property type="component" value="Chromosome"/>
</dbReference>
<dbReference type="GO" id="GO:0022625">
    <property type="term" value="C:cytosolic large ribosomal subunit"/>
    <property type="evidence" value="ECO:0007669"/>
    <property type="project" value="TreeGrafter"/>
</dbReference>
<dbReference type="GO" id="GO:0003735">
    <property type="term" value="F:structural constituent of ribosome"/>
    <property type="evidence" value="ECO:0007669"/>
    <property type="project" value="InterPro"/>
</dbReference>
<dbReference type="GO" id="GO:0006412">
    <property type="term" value="P:translation"/>
    <property type="evidence" value="ECO:0007669"/>
    <property type="project" value="UniProtKB-UniRule"/>
</dbReference>
<dbReference type="FunFam" id="4.10.410.60:FF:000001">
    <property type="entry name" value="50S ribosomal protein L35"/>
    <property type="match status" value="1"/>
</dbReference>
<dbReference type="Gene3D" id="4.10.410.60">
    <property type="match status" value="1"/>
</dbReference>
<dbReference type="HAMAP" id="MF_00514">
    <property type="entry name" value="Ribosomal_bL35"/>
    <property type="match status" value="1"/>
</dbReference>
<dbReference type="InterPro" id="IPR001706">
    <property type="entry name" value="Ribosomal_bL35"/>
</dbReference>
<dbReference type="InterPro" id="IPR021137">
    <property type="entry name" value="Ribosomal_bL35-like"/>
</dbReference>
<dbReference type="InterPro" id="IPR018265">
    <property type="entry name" value="Ribosomal_bL35_CS"/>
</dbReference>
<dbReference type="InterPro" id="IPR037229">
    <property type="entry name" value="Ribosomal_bL35_sf"/>
</dbReference>
<dbReference type="NCBIfam" id="TIGR00001">
    <property type="entry name" value="rpmI_bact"/>
    <property type="match status" value="1"/>
</dbReference>
<dbReference type="PANTHER" id="PTHR33343">
    <property type="entry name" value="54S RIBOSOMAL PROTEIN BL35M"/>
    <property type="match status" value="1"/>
</dbReference>
<dbReference type="PANTHER" id="PTHR33343:SF1">
    <property type="entry name" value="LARGE RIBOSOMAL SUBUNIT PROTEIN BL35M"/>
    <property type="match status" value="1"/>
</dbReference>
<dbReference type="Pfam" id="PF01632">
    <property type="entry name" value="Ribosomal_L35p"/>
    <property type="match status" value="1"/>
</dbReference>
<dbReference type="PRINTS" id="PR00064">
    <property type="entry name" value="RIBOSOMALL35"/>
</dbReference>
<dbReference type="SUPFAM" id="SSF143034">
    <property type="entry name" value="L35p-like"/>
    <property type="match status" value="1"/>
</dbReference>
<dbReference type="PROSITE" id="PS00936">
    <property type="entry name" value="RIBOSOMAL_L35"/>
    <property type="match status" value="1"/>
</dbReference>